<organism>
    <name type="scientific">Burkholderia mallei (strain NCTC 10247)</name>
    <dbReference type="NCBI Taxonomy" id="320389"/>
    <lineage>
        <taxon>Bacteria</taxon>
        <taxon>Pseudomonadati</taxon>
        <taxon>Pseudomonadota</taxon>
        <taxon>Betaproteobacteria</taxon>
        <taxon>Burkholderiales</taxon>
        <taxon>Burkholderiaceae</taxon>
        <taxon>Burkholderia</taxon>
        <taxon>pseudomallei group</taxon>
    </lineage>
</organism>
<gene>
    <name evidence="1" type="primary">pyrG</name>
    <name type="ordered locus">BMA10247_1468</name>
</gene>
<dbReference type="EC" id="6.3.4.2" evidence="1"/>
<dbReference type="EMBL" id="CP000548">
    <property type="protein sequence ID" value="ABO04521.1"/>
    <property type="molecule type" value="Genomic_DNA"/>
</dbReference>
<dbReference type="RefSeq" id="WP_004192790.1">
    <property type="nucleotide sequence ID" value="NZ_CP007802.1"/>
</dbReference>
<dbReference type="SMR" id="A3ML79"/>
<dbReference type="KEGG" id="bmaz:BM44_1679"/>
<dbReference type="KEGG" id="bmn:BMA10247_1468"/>
<dbReference type="PATRIC" id="fig|320389.8.peg.1878"/>
<dbReference type="UniPathway" id="UPA00159">
    <property type="reaction ID" value="UER00277"/>
</dbReference>
<dbReference type="GO" id="GO:0005829">
    <property type="term" value="C:cytosol"/>
    <property type="evidence" value="ECO:0007669"/>
    <property type="project" value="TreeGrafter"/>
</dbReference>
<dbReference type="GO" id="GO:0005524">
    <property type="term" value="F:ATP binding"/>
    <property type="evidence" value="ECO:0007669"/>
    <property type="project" value="UniProtKB-KW"/>
</dbReference>
<dbReference type="GO" id="GO:0003883">
    <property type="term" value="F:CTP synthase activity"/>
    <property type="evidence" value="ECO:0007669"/>
    <property type="project" value="UniProtKB-UniRule"/>
</dbReference>
<dbReference type="GO" id="GO:0004359">
    <property type="term" value="F:glutaminase activity"/>
    <property type="evidence" value="ECO:0007669"/>
    <property type="project" value="RHEA"/>
</dbReference>
<dbReference type="GO" id="GO:0042802">
    <property type="term" value="F:identical protein binding"/>
    <property type="evidence" value="ECO:0007669"/>
    <property type="project" value="TreeGrafter"/>
</dbReference>
<dbReference type="GO" id="GO:0046872">
    <property type="term" value="F:metal ion binding"/>
    <property type="evidence" value="ECO:0007669"/>
    <property type="project" value="UniProtKB-KW"/>
</dbReference>
<dbReference type="GO" id="GO:0044210">
    <property type="term" value="P:'de novo' CTP biosynthetic process"/>
    <property type="evidence" value="ECO:0007669"/>
    <property type="project" value="UniProtKB-UniRule"/>
</dbReference>
<dbReference type="GO" id="GO:0019856">
    <property type="term" value="P:pyrimidine nucleobase biosynthetic process"/>
    <property type="evidence" value="ECO:0007669"/>
    <property type="project" value="TreeGrafter"/>
</dbReference>
<dbReference type="CDD" id="cd03113">
    <property type="entry name" value="CTPS_N"/>
    <property type="match status" value="1"/>
</dbReference>
<dbReference type="CDD" id="cd01746">
    <property type="entry name" value="GATase1_CTP_Synthase"/>
    <property type="match status" value="1"/>
</dbReference>
<dbReference type="FunFam" id="3.40.50.300:FF:000009">
    <property type="entry name" value="CTP synthase"/>
    <property type="match status" value="1"/>
</dbReference>
<dbReference type="FunFam" id="3.40.50.880:FF:000002">
    <property type="entry name" value="CTP synthase"/>
    <property type="match status" value="1"/>
</dbReference>
<dbReference type="Gene3D" id="3.40.50.880">
    <property type="match status" value="1"/>
</dbReference>
<dbReference type="Gene3D" id="3.40.50.300">
    <property type="entry name" value="P-loop containing nucleotide triphosphate hydrolases"/>
    <property type="match status" value="1"/>
</dbReference>
<dbReference type="HAMAP" id="MF_01227">
    <property type="entry name" value="PyrG"/>
    <property type="match status" value="1"/>
</dbReference>
<dbReference type="InterPro" id="IPR029062">
    <property type="entry name" value="Class_I_gatase-like"/>
</dbReference>
<dbReference type="InterPro" id="IPR004468">
    <property type="entry name" value="CTP_synthase"/>
</dbReference>
<dbReference type="InterPro" id="IPR017456">
    <property type="entry name" value="CTP_synthase_N"/>
</dbReference>
<dbReference type="InterPro" id="IPR017926">
    <property type="entry name" value="GATASE"/>
</dbReference>
<dbReference type="InterPro" id="IPR033828">
    <property type="entry name" value="GATase1_CTP_Synthase"/>
</dbReference>
<dbReference type="InterPro" id="IPR027417">
    <property type="entry name" value="P-loop_NTPase"/>
</dbReference>
<dbReference type="NCBIfam" id="NF003792">
    <property type="entry name" value="PRK05380.1"/>
    <property type="match status" value="1"/>
</dbReference>
<dbReference type="NCBIfam" id="TIGR00337">
    <property type="entry name" value="PyrG"/>
    <property type="match status" value="1"/>
</dbReference>
<dbReference type="PANTHER" id="PTHR11550">
    <property type="entry name" value="CTP SYNTHASE"/>
    <property type="match status" value="1"/>
</dbReference>
<dbReference type="PANTHER" id="PTHR11550:SF0">
    <property type="entry name" value="CTP SYNTHASE-RELATED"/>
    <property type="match status" value="1"/>
</dbReference>
<dbReference type="Pfam" id="PF06418">
    <property type="entry name" value="CTP_synth_N"/>
    <property type="match status" value="1"/>
</dbReference>
<dbReference type="Pfam" id="PF00117">
    <property type="entry name" value="GATase"/>
    <property type="match status" value="1"/>
</dbReference>
<dbReference type="SUPFAM" id="SSF52317">
    <property type="entry name" value="Class I glutamine amidotransferase-like"/>
    <property type="match status" value="1"/>
</dbReference>
<dbReference type="SUPFAM" id="SSF52540">
    <property type="entry name" value="P-loop containing nucleoside triphosphate hydrolases"/>
    <property type="match status" value="1"/>
</dbReference>
<dbReference type="PROSITE" id="PS51273">
    <property type="entry name" value="GATASE_TYPE_1"/>
    <property type="match status" value="1"/>
</dbReference>
<reference key="1">
    <citation type="journal article" date="2010" name="Genome Biol. Evol.">
        <title>Continuing evolution of Burkholderia mallei through genome reduction and large-scale rearrangements.</title>
        <authorList>
            <person name="Losada L."/>
            <person name="Ronning C.M."/>
            <person name="DeShazer D."/>
            <person name="Woods D."/>
            <person name="Fedorova N."/>
            <person name="Kim H.S."/>
            <person name="Shabalina S.A."/>
            <person name="Pearson T.R."/>
            <person name="Brinkac L."/>
            <person name="Tan P."/>
            <person name="Nandi T."/>
            <person name="Crabtree J."/>
            <person name="Badger J."/>
            <person name="Beckstrom-Sternberg S."/>
            <person name="Saqib M."/>
            <person name="Schutzer S.E."/>
            <person name="Keim P."/>
            <person name="Nierman W.C."/>
        </authorList>
    </citation>
    <scope>NUCLEOTIDE SEQUENCE [LARGE SCALE GENOMIC DNA]</scope>
    <source>
        <strain>NCTC 10247</strain>
    </source>
</reference>
<feature type="chain" id="PRO_1000139402" description="CTP synthase">
    <location>
        <begin position="1"/>
        <end position="553"/>
    </location>
</feature>
<feature type="domain" description="Glutamine amidotransferase type-1" evidence="1">
    <location>
        <begin position="295"/>
        <end position="547"/>
    </location>
</feature>
<feature type="region of interest" description="Amidoligase domain" evidence="1">
    <location>
        <begin position="1"/>
        <end position="270"/>
    </location>
</feature>
<feature type="active site" description="Nucleophile; for glutamine hydrolysis" evidence="1">
    <location>
        <position position="383"/>
    </location>
</feature>
<feature type="active site" evidence="1">
    <location>
        <position position="520"/>
    </location>
</feature>
<feature type="active site" evidence="1">
    <location>
        <position position="522"/>
    </location>
</feature>
<feature type="binding site" evidence="1">
    <location>
        <position position="13"/>
    </location>
    <ligand>
        <name>CTP</name>
        <dbReference type="ChEBI" id="CHEBI:37563"/>
        <note>allosteric inhibitor</note>
    </ligand>
</feature>
<feature type="binding site" evidence="1">
    <location>
        <position position="13"/>
    </location>
    <ligand>
        <name>UTP</name>
        <dbReference type="ChEBI" id="CHEBI:46398"/>
    </ligand>
</feature>
<feature type="binding site" evidence="1">
    <location>
        <begin position="14"/>
        <end position="19"/>
    </location>
    <ligand>
        <name>ATP</name>
        <dbReference type="ChEBI" id="CHEBI:30616"/>
    </ligand>
</feature>
<feature type="binding site" evidence="1">
    <location>
        <position position="71"/>
    </location>
    <ligand>
        <name>ATP</name>
        <dbReference type="ChEBI" id="CHEBI:30616"/>
    </ligand>
</feature>
<feature type="binding site" evidence="1">
    <location>
        <position position="71"/>
    </location>
    <ligand>
        <name>Mg(2+)</name>
        <dbReference type="ChEBI" id="CHEBI:18420"/>
    </ligand>
</feature>
<feature type="binding site" evidence="1">
    <location>
        <position position="144"/>
    </location>
    <ligand>
        <name>Mg(2+)</name>
        <dbReference type="ChEBI" id="CHEBI:18420"/>
    </ligand>
</feature>
<feature type="binding site" evidence="1">
    <location>
        <begin position="151"/>
        <end position="153"/>
    </location>
    <ligand>
        <name>CTP</name>
        <dbReference type="ChEBI" id="CHEBI:37563"/>
        <note>allosteric inhibitor</note>
    </ligand>
</feature>
<feature type="binding site" evidence="1">
    <location>
        <begin position="191"/>
        <end position="196"/>
    </location>
    <ligand>
        <name>CTP</name>
        <dbReference type="ChEBI" id="CHEBI:37563"/>
        <note>allosteric inhibitor</note>
    </ligand>
</feature>
<feature type="binding site" evidence="1">
    <location>
        <begin position="191"/>
        <end position="196"/>
    </location>
    <ligand>
        <name>UTP</name>
        <dbReference type="ChEBI" id="CHEBI:46398"/>
    </ligand>
</feature>
<feature type="binding site" evidence="1">
    <location>
        <position position="227"/>
    </location>
    <ligand>
        <name>CTP</name>
        <dbReference type="ChEBI" id="CHEBI:37563"/>
        <note>allosteric inhibitor</note>
    </ligand>
</feature>
<feature type="binding site" evidence="1">
    <location>
        <position position="227"/>
    </location>
    <ligand>
        <name>UTP</name>
        <dbReference type="ChEBI" id="CHEBI:46398"/>
    </ligand>
</feature>
<feature type="binding site" evidence="1">
    <location>
        <position position="356"/>
    </location>
    <ligand>
        <name>L-glutamine</name>
        <dbReference type="ChEBI" id="CHEBI:58359"/>
    </ligand>
</feature>
<feature type="binding site" evidence="1">
    <location>
        <begin position="384"/>
        <end position="387"/>
    </location>
    <ligand>
        <name>L-glutamine</name>
        <dbReference type="ChEBI" id="CHEBI:58359"/>
    </ligand>
</feature>
<feature type="binding site" evidence="1">
    <location>
        <position position="407"/>
    </location>
    <ligand>
        <name>L-glutamine</name>
        <dbReference type="ChEBI" id="CHEBI:58359"/>
    </ligand>
</feature>
<feature type="binding site" evidence="1">
    <location>
        <position position="473"/>
    </location>
    <ligand>
        <name>L-glutamine</name>
        <dbReference type="ChEBI" id="CHEBI:58359"/>
    </ligand>
</feature>
<protein>
    <recommendedName>
        <fullName evidence="1">CTP synthase</fullName>
        <ecNumber evidence="1">6.3.4.2</ecNumber>
    </recommendedName>
    <alternativeName>
        <fullName evidence="1">Cytidine 5'-triphosphate synthase</fullName>
    </alternativeName>
    <alternativeName>
        <fullName evidence="1">Cytidine triphosphate synthetase</fullName>
        <shortName evidence="1">CTP synthetase</shortName>
        <shortName evidence="1">CTPS</shortName>
    </alternativeName>
    <alternativeName>
        <fullName evidence="1">UTP--ammonia ligase</fullName>
    </alternativeName>
</protein>
<accession>A3ML79</accession>
<proteinExistence type="inferred from homology"/>
<comment type="function">
    <text evidence="1">Catalyzes the ATP-dependent amination of UTP to CTP with either L-glutamine or ammonia as the source of nitrogen. Regulates intracellular CTP levels through interactions with the four ribonucleotide triphosphates.</text>
</comment>
<comment type="catalytic activity">
    <reaction evidence="1">
        <text>UTP + L-glutamine + ATP + H2O = CTP + L-glutamate + ADP + phosphate + 2 H(+)</text>
        <dbReference type="Rhea" id="RHEA:26426"/>
        <dbReference type="ChEBI" id="CHEBI:15377"/>
        <dbReference type="ChEBI" id="CHEBI:15378"/>
        <dbReference type="ChEBI" id="CHEBI:29985"/>
        <dbReference type="ChEBI" id="CHEBI:30616"/>
        <dbReference type="ChEBI" id="CHEBI:37563"/>
        <dbReference type="ChEBI" id="CHEBI:43474"/>
        <dbReference type="ChEBI" id="CHEBI:46398"/>
        <dbReference type="ChEBI" id="CHEBI:58359"/>
        <dbReference type="ChEBI" id="CHEBI:456216"/>
        <dbReference type="EC" id="6.3.4.2"/>
    </reaction>
</comment>
<comment type="catalytic activity">
    <reaction evidence="1">
        <text>L-glutamine + H2O = L-glutamate + NH4(+)</text>
        <dbReference type="Rhea" id="RHEA:15889"/>
        <dbReference type="ChEBI" id="CHEBI:15377"/>
        <dbReference type="ChEBI" id="CHEBI:28938"/>
        <dbReference type="ChEBI" id="CHEBI:29985"/>
        <dbReference type="ChEBI" id="CHEBI:58359"/>
    </reaction>
</comment>
<comment type="catalytic activity">
    <reaction evidence="1">
        <text>UTP + NH4(+) + ATP = CTP + ADP + phosphate + 2 H(+)</text>
        <dbReference type="Rhea" id="RHEA:16597"/>
        <dbReference type="ChEBI" id="CHEBI:15378"/>
        <dbReference type="ChEBI" id="CHEBI:28938"/>
        <dbReference type="ChEBI" id="CHEBI:30616"/>
        <dbReference type="ChEBI" id="CHEBI:37563"/>
        <dbReference type="ChEBI" id="CHEBI:43474"/>
        <dbReference type="ChEBI" id="CHEBI:46398"/>
        <dbReference type="ChEBI" id="CHEBI:456216"/>
    </reaction>
</comment>
<comment type="activity regulation">
    <text evidence="1">Allosterically activated by GTP, when glutamine is the substrate; GTP has no effect on the reaction when ammonia is the substrate. The allosteric effector GTP functions by stabilizing the protein conformation that binds the tetrahedral intermediate(s) formed during glutamine hydrolysis. Inhibited by the product CTP, via allosteric rather than competitive inhibition.</text>
</comment>
<comment type="pathway">
    <text evidence="1">Pyrimidine metabolism; CTP biosynthesis via de novo pathway; CTP from UDP: step 2/2.</text>
</comment>
<comment type="subunit">
    <text evidence="1">Homotetramer.</text>
</comment>
<comment type="miscellaneous">
    <text evidence="1">CTPSs have evolved a hybrid strategy for distinguishing between UTP and CTP. The overlapping regions of the product feedback inhibitory and substrate sites recognize a common feature in both compounds, the triphosphate moiety. To differentiate isosteric substrate and product pyrimidine rings, an additional pocket far from the expected kinase/ligase catalytic site, specifically recognizes the cytosine and ribose portions of the product inhibitor.</text>
</comment>
<comment type="similarity">
    <text evidence="1">Belongs to the CTP synthase family.</text>
</comment>
<keyword id="KW-0067">ATP-binding</keyword>
<keyword id="KW-0315">Glutamine amidotransferase</keyword>
<keyword id="KW-0436">Ligase</keyword>
<keyword id="KW-0460">Magnesium</keyword>
<keyword id="KW-0479">Metal-binding</keyword>
<keyword id="KW-0547">Nucleotide-binding</keyword>
<keyword id="KW-0665">Pyrimidine biosynthesis</keyword>
<evidence type="ECO:0000255" key="1">
    <source>
        <dbReference type="HAMAP-Rule" id="MF_01227"/>
    </source>
</evidence>
<sequence length="553" mass="61042">MTKYVFVTGGVVSSLGKGIAAASLAAILESRGLKVTLLKLDPYINVDPGTMSPFQHGEVFVTEDGAETDLDLGHYERFISTKMRKANNFTTGQIYESVIRKERRGDYLGKTVQVIPHITNEIQAFIERGAASATCGEPDVAIVEIGGTVGDIESLPFLEAARQMSLRLGRNSACFVHLTLVPFIATAGELKTKPTQHSVQKLREIGISPHVLLCRADRPIPDDESKKISLFSNVPEDAVISVWDVDSIYKIPQMLHDQGLDRLICEELRLDPQPADLRMWAALVEKLQNPKHEVTIGMVGKYVDLTESYKSLIEALRHASIHTSTKVNIEYIDSEELETNGTASLAHLDAVLVPGGFGRRGTEGKIAAVRYAREAKVPYLGICLGMQLAVIEFARDVVGLKQANSTEFDPNTPERVVALITEWYDREGKVEKRTEDSDLGGTMRLGSQRCPIKPGTLAEAIYGKDVNERHRHRYEVNNRFVPQLEAGGLVISARTPSEDLPEMMELPSTMHPWFVGVQFHPEFTSTPRDGHPLFKSFVQAALACQQTRAGAKA</sequence>
<name>PYRG_BURM7</name>